<keyword id="KW-0049">Antioxidant</keyword>
<keyword id="KW-0186">Copper</keyword>
<keyword id="KW-0963">Cytoplasm</keyword>
<keyword id="KW-1015">Disulfide bond</keyword>
<keyword id="KW-0479">Metal-binding</keyword>
<keyword id="KW-0560">Oxidoreductase</keyword>
<keyword id="KW-0862">Zinc</keyword>
<protein>
    <recommendedName>
        <fullName>Superoxide dismutase [Cu-Zn]</fullName>
        <ecNumber>1.15.1.1</ecNumber>
    </recommendedName>
</protein>
<accession>O22668</accession>
<comment type="function">
    <text>Destroys radicals which are normally produced within the cells and which are toxic to biological systems.</text>
</comment>
<comment type="catalytic activity">
    <reaction>
        <text>2 superoxide + 2 H(+) = H2O2 + O2</text>
        <dbReference type="Rhea" id="RHEA:20696"/>
        <dbReference type="ChEBI" id="CHEBI:15378"/>
        <dbReference type="ChEBI" id="CHEBI:15379"/>
        <dbReference type="ChEBI" id="CHEBI:16240"/>
        <dbReference type="ChEBI" id="CHEBI:18421"/>
        <dbReference type="EC" id="1.15.1.1"/>
    </reaction>
</comment>
<comment type="cofactor">
    <cofactor evidence="1">
        <name>Cu cation</name>
        <dbReference type="ChEBI" id="CHEBI:23378"/>
    </cofactor>
    <text evidence="1">Binds 1 copper ion per subunit.</text>
</comment>
<comment type="cofactor">
    <cofactor evidence="1">
        <name>Zn(2+)</name>
        <dbReference type="ChEBI" id="CHEBI:29105"/>
    </cofactor>
    <text evidence="1">Binds 1 zinc ion per subunit.</text>
</comment>
<comment type="subunit">
    <text evidence="1">Homodimer.</text>
</comment>
<comment type="subcellular location">
    <subcellularLocation>
        <location>Cytoplasm</location>
    </subcellularLocation>
</comment>
<comment type="similarity">
    <text evidence="2">Belongs to the Cu-Zn superoxide dismutase family.</text>
</comment>
<proteinExistence type="evidence at transcript level"/>
<reference key="1">
    <citation type="submission" date="1997-11" db="EMBL/GenBank/DDBJ databases">
        <title>Nucleotide sequence of a Korean ginseng complementary DNA encoding Cu/Zn superoxide dismutase.</title>
        <authorList>
            <person name="Kim K.-S."/>
            <person name="Park J.C."/>
            <person name="Choi K.-T."/>
        </authorList>
    </citation>
    <scope>NUCLEOTIDE SEQUENCE [MRNA]</scope>
</reference>
<organism>
    <name type="scientific">Panax ginseng</name>
    <name type="common">Korean ginseng</name>
    <dbReference type="NCBI Taxonomy" id="4054"/>
    <lineage>
        <taxon>Eukaryota</taxon>
        <taxon>Viridiplantae</taxon>
        <taxon>Streptophyta</taxon>
        <taxon>Embryophyta</taxon>
        <taxon>Tracheophyta</taxon>
        <taxon>Spermatophyta</taxon>
        <taxon>Magnoliopsida</taxon>
        <taxon>eudicotyledons</taxon>
        <taxon>Gunneridae</taxon>
        <taxon>Pentapetalae</taxon>
        <taxon>asterids</taxon>
        <taxon>campanulids</taxon>
        <taxon>Apiales</taxon>
        <taxon>Araliaceae</taxon>
        <taxon>Panax</taxon>
    </lineage>
</organism>
<evidence type="ECO:0000250" key="1"/>
<evidence type="ECO:0000305" key="2"/>
<gene>
    <name type="primary">SODCC</name>
    <name type="synonym">SOD</name>
</gene>
<sequence>MVKAVTVLSGSGGVSGVIHFTQEEDGPTTVTGKLSGLAPGLHGFHVHALGDTTNGCLSTGPHYNPANKEHGAPEDETRHAGDLGNVTVGEDGTAEFTIVDKQIPLIGSGSIIGRAVVVHADPDDLGKGGHELSKSTGNAGGRLACGFIGLQG</sequence>
<dbReference type="EC" id="1.15.1.1"/>
<dbReference type="EMBL" id="AF034630">
    <property type="protein sequence ID" value="AAB87572.1"/>
    <property type="molecule type" value="mRNA"/>
</dbReference>
<dbReference type="SMR" id="O22668"/>
<dbReference type="GO" id="GO:0005737">
    <property type="term" value="C:cytoplasm"/>
    <property type="evidence" value="ECO:0007669"/>
    <property type="project" value="UniProtKB-SubCell"/>
</dbReference>
<dbReference type="GO" id="GO:0005507">
    <property type="term" value="F:copper ion binding"/>
    <property type="evidence" value="ECO:0007669"/>
    <property type="project" value="InterPro"/>
</dbReference>
<dbReference type="GO" id="GO:0004784">
    <property type="term" value="F:superoxide dismutase activity"/>
    <property type="evidence" value="ECO:0007669"/>
    <property type="project" value="UniProtKB-EC"/>
</dbReference>
<dbReference type="CDD" id="cd00305">
    <property type="entry name" value="Cu-Zn_Superoxide_Dismutase"/>
    <property type="match status" value="1"/>
</dbReference>
<dbReference type="FunFam" id="2.60.40.200:FF:000001">
    <property type="entry name" value="Superoxide dismutase [Cu-Zn]"/>
    <property type="match status" value="1"/>
</dbReference>
<dbReference type="Gene3D" id="2.60.40.200">
    <property type="entry name" value="Superoxide dismutase, copper/zinc binding domain"/>
    <property type="match status" value="1"/>
</dbReference>
<dbReference type="InterPro" id="IPR036423">
    <property type="entry name" value="SOD-like_Cu/Zn_dom_sf"/>
</dbReference>
<dbReference type="InterPro" id="IPR024134">
    <property type="entry name" value="SOD_Cu/Zn_/chaperone"/>
</dbReference>
<dbReference type="InterPro" id="IPR018152">
    <property type="entry name" value="SOD_Cu/Zn_BS"/>
</dbReference>
<dbReference type="InterPro" id="IPR001424">
    <property type="entry name" value="SOD_Cu_Zn_dom"/>
</dbReference>
<dbReference type="PANTHER" id="PTHR10003">
    <property type="entry name" value="SUPEROXIDE DISMUTASE CU-ZN -RELATED"/>
    <property type="match status" value="1"/>
</dbReference>
<dbReference type="Pfam" id="PF00080">
    <property type="entry name" value="Sod_Cu"/>
    <property type="match status" value="1"/>
</dbReference>
<dbReference type="PRINTS" id="PR00068">
    <property type="entry name" value="CUZNDISMTASE"/>
</dbReference>
<dbReference type="SUPFAM" id="SSF49329">
    <property type="entry name" value="Cu,Zn superoxide dismutase-like"/>
    <property type="match status" value="1"/>
</dbReference>
<dbReference type="PROSITE" id="PS00087">
    <property type="entry name" value="SOD_CU_ZN_1"/>
    <property type="match status" value="1"/>
</dbReference>
<dbReference type="PROSITE" id="PS00332">
    <property type="entry name" value="SOD_CU_ZN_2"/>
    <property type="match status" value="1"/>
</dbReference>
<name>SODC_PANGI</name>
<feature type="chain" id="PRO_0000164150" description="Superoxide dismutase [Cu-Zn]">
    <location>
        <begin position="1"/>
        <end position="152"/>
    </location>
</feature>
<feature type="binding site" evidence="1">
    <location>
        <position position="45"/>
    </location>
    <ligand>
        <name>Cu cation</name>
        <dbReference type="ChEBI" id="CHEBI:23378"/>
        <note>catalytic</note>
    </ligand>
</feature>
<feature type="binding site" evidence="1">
    <location>
        <position position="47"/>
    </location>
    <ligand>
        <name>Cu cation</name>
        <dbReference type="ChEBI" id="CHEBI:23378"/>
        <note>catalytic</note>
    </ligand>
</feature>
<feature type="binding site" evidence="1">
    <location>
        <position position="62"/>
    </location>
    <ligand>
        <name>Cu cation</name>
        <dbReference type="ChEBI" id="CHEBI:23378"/>
        <note>catalytic</note>
    </ligand>
</feature>
<feature type="binding site" evidence="1">
    <location>
        <position position="62"/>
    </location>
    <ligand>
        <name>Zn(2+)</name>
        <dbReference type="ChEBI" id="CHEBI:29105"/>
        <note>structural</note>
    </ligand>
</feature>
<feature type="binding site" evidence="1">
    <location>
        <position position="70"/>
    </location>
    <ligand>
        <name>Zn(2+)</name>
        <dbReference type="ChEBI" id="CHEBI:29105"/>
        <note>structural</note>
    </ligand>
</feature>
<feature type="binding site" evidence="1">
    <location>
        <position position="79"/>
    </location>
    <ligand>
        <name>Zn(2+)</name>
        <dbReference type="ChEBI" id="CHEBI:29105"/>
        <note>structural</note>
    </ligand>
</feature>
<feature type="binding site" evidence="1">
    <location>
        <position position="82"/>
    </location>
    <ligand>
        <name>Zn(2+)</name>
        <dbReference type="ChEBI" id="CHEBI:29105"/>
        <note>structural</note>
    </ligand>
</feature>
<feature type="binding site" evidence="1">
    <location>
        <position position="119"/>
    </location>
    <ligand>
        <name>Cu cation</name>
        <dbReference type="ChEBI" id="CHEBI:23378"/>
        <note>catalytic</note>
    </ligand>
</feature>
<feature type="disulfide bond" evidence="1">
    <location>
        <begin position="56"/>
        <end position="145"/>
    </location>
</feature>